<reference key="1">
    <citation type="journal article" date="1991" name="J. Gen. Virol.">
        <title>Unexpected sequence diversity in the amino-terminal ends of the coat proteins of strains of sugarcane mosaic virus.</title>
        <authorList>
            <person name="Frenkel M.J."/>
            <person name="Jilka J.M."/>
            <person name="McKern N.M."/>
            <person name="Strike P.M."/>
            <person name="Clark J.M. Jr."/>
            <person name="Shukla D.D."/>
            <person name="Ward C.W."/>
        </authorList>
    </citation>
    <scope>NUCLEOTIDE SEQUENCE [MRNA]</scope>
</reference>
<reference key="2">
    <citation type="journal article" date="2001" name="Virus Res.">
        <title>Potyvirus proteins: a wealth of functions.</title>
        <authorList>
            <person name="Urcuqui-Inchima S."/>
            <person name="Haenni A.L."/>
            <person name="Bernardi F."/>
        </authorList>
    </citation>
    <scope>REVIEW</scope>
</reference>
<protein>
    <recommendedName>
        <fullName>Genome polyprotein</fullName>
    </recommendedName>
    <component>
        <recommendedName>
            <fullName>Nuclear inclusion protein B</fullName>
            <shortName>NI-B</shortName>
            <shortName>NIB</shortName>
        </recommendedName>
        <alternativeName>
            <fullName>RNA-directed RNA polymerase</fullName>
            <ecNumber>2.7.7.48</ecNumber>
        </alternativeName>
    </component>
    <component>
        <recommendedName>
            <fullName>Capsid protein</fullName>
            <shortName>CP</shortName>
        </recommendedName>
        <alternativeName>
            <fullName>Coat protein</fullName>
        </alternativeName>
    </component>
</protein>
<feature type="chain" id="PRO_0000040448" description="Nuclear inclusion protein B" evidence="1">
    <location>
        <begin position="1" status="less than"/>
        <end position="52"/>
    </location>
</feature>
<feature type="chain" id="PRO_0000420025" description="Genome polyprotein">
    <location>
        <begin position="1"/>
        <end position="365"/>
    </location>
</feature>
<feature type="chain" id="PRO_0000040449" description="Capsid protein" evidence="1">
    <location>
        <begin position="53"/>
        <end position="365"/>
    </location>
</feature>
<feature type="region of interest" description="Disordered" evidence="4">
    <location>
        <begin position="56"/>
        <end position="136"/>
    </location>
</feature>
<feature type="region of interest" description="Disordered" evidence="4">
    <location>
        <begin position="334"/>
        <end position="365"/>
    </location>
</feature>
<feature type="compositionally biased region" description="Low complexity" evidence="4">
    <location>
        <begin position="68"/>
        <end position="98"/>
    </location>
</feature>
<feature type="compositionally biased region" description="Gly residues" evidence="4">
    <location>
        <begin position="105"/>
        <end position="123"/>
    </location>
</feature>
<feature type="site" description="Cleavage; by NIa-pro" evidence="1">
    <location>
        <begin position="52"/>
        <end position="53"/>
    </location>
</feature>
<feature type="non-terminal residue">
    <location>
        <position position="1"/>
    </location>
</feature>
<accession>P25242</accession>
<proteinExistence type="evidence at transcript level"/>
<dbReference type="EC" id="2.7.7.48"/>
<dbReference type="EMBL" id="D00948">
    <property type="protein sequence ID" value="BAA00796.1"/>
    <property type="molecule type" value="mRNA"/>
</dbReference>
<dbReference type="PIR" id="PH0207">
    <property type="entry name" value="GNVSSC"/>
</dbReference>
<dbReference type="SMR" id="P25242"/>
<dbReference type="GO" id="GO:0019028">
    <property type="term" value="C:viral capsid"/>
    <property type="evidence" value="ECO:0007669"/>
    <property type="project" value="UniProtKB-KW"/>
</dbReference>
<dbReference type="GO" id="GO:0003968">
    <property type="term" value="F:RNA-directed RNA polymerase activity"/>
    <property type="evidence" value="ECO:0007669"/>
    <property type="project" value="UniProtKB-KW"/>
</dbReference>
<dbReference type="InterPro" id="IPR001592">
    <property type="entry name" value="Poty_coat"/>
</dbReference>
<dbReference type="Pfam" id="PF00767">
    <property type="entry name" value="Poty_coat"/>
    <property type="match status" value="1"/>
</dbReference>
<name>POLG_SUMVS</name>
<evidence type="ECO:0000250" key="1"/>
<evidence type="ECO:0000250" key="2">
    <source>
        <dbReference type="UniProtKB" id="P04517"/>
    </source>
</evidence>
<evidence type="ECO:0000255" key="3">
    <source>
        <dbReference type="PROSITE-ProRule" id="PRU00539"/>
    </source>
</evidence>
<evidence type="ECO:0000256" key="4">
    <source>
        <dbReference type="SAM" id="MobiDB-lite"/>
    </source>
</evidence>
<evidence type="ECO:0000305" key="5"/>
<sequence>KEGLAPYIAETALRNLYLGSGIKEEEIEKYFKQFAKDLPGYLEDYNDEVFHQAGTVDAGAQGGGGNAGTQPPATGAAAQGGAQPPATGAAAQPPTTQGSQLPQGGATGGGGAQTGAGGTGSVTGGQRDKDVDAGTTGKITVPKLKAMSKKMRLPKAKGQDVLHLDFLLTYKPQQQDISNTRATREEFDRWYEAIKKEYELDDTQMTVVMSGLMVWCIENGCSPNISGSWTMMDGDEQTVFPLKPVIENASPTFRQIMHHFSDAAEAYIEYRNSTERYMPRYGLQRNLTDYSLARYAFDFYEMNSRTPARAKEAHMQMKAAAVRGSNTRLFGLDGNVGETQENTERHTAGDVSRNMHSLLGVQQHH</sequence>
<comment type="function">
    <molecule>Nuclear inclusion protein B</molecule>
    <text>An RNA-dependent RNA polymerase that plays an essential role in the virus replication.</text>
</comment>
<comment type="function">
    <molecule>Capsid protein</molecule>
    <text evidence="2">Involved in aphid transmission, cell-to-cell and systemis movement, encapsidation of the viral RNA and in the regulation of viral RNA amplification.</text>
</comment>
<comment type="catalytic activity">
    <reaction evidence="3">
        <text>RNA(n) + a ribonucleoside 5'-triphosphate = RNA(n+1) + diphosphate</text>
        <dbReference type="Rhea" id="RHEA:21248"/>
        <dbReference type="Rhea" id="RHEA-COMP:14527"/>
        <dbReference type="Rhea" id="RHEA-COMP:17342"/>
        <dbReference type="ChEBI" id="CHEBI:33019"/>
        <dbReference type="ChEBI" id="CHEBI:61557"/>
        <dbReference type="ChEBI" id="CHEBI:140395"/>
        <dbReference type="EC" id="2.7.7.48"/>
    </reaction>
</comment>
<comment type="subcellular location">
    <molecule>Capsid protein</molecule>
    <subcellularLocation>
        <location evidence="5">Virion</location>
    </subcellularLocation>
</comment>
<comment type="PTM">
    <molecule>Genome polyprotein</molecule>
    <text evidence="1">Genome polyprotein of potyviruses undergoes post-translational proteolytic processing by the main proteinase NIa-pro resulting in the production of at least ten individual proteins. The P1 proteinase and the HC-pro cleave only their respective C-termini autocatalytically. 6K1 is essential for proper proteolytic separation of P3 from CI (By similarity).</text>
</comment>
<comment type="similarity">
    <text evidence="5">Belongs to the potyviridae genome polyprotein family.</text>
</comment>
<organismHost>
    <name type="scientific">Eleusine</name>
    <dbReference type="NCBI Taxonomy" id="4510"/>
</organismHost>
<organismHost>
    <name type="scientific">Panicum</name>
    <dbReference type="NCBI Taxonomy" id="4539"/>
</organismHost>
<organismHost>
    <name type="scientific">Saccharum</name>
    <dbReference type="NCBI Taxonomy" id="4546"/>
</organismHost>
<organismHost>
    <name type="scientific">Setaria</name>
    <dbReference type="NCBI Taxonomy" id="4554"/>
</organismHost>
<organismHost>
    <name type="scientific">Sorghum bicolor</name>
    <name type="common">Sorghum</name>
    <name type="synonym">Sorghum vulgare</name>
    <dbReference type="NCBI Taxonomy" id="4558"/>
</organismHost>
<organismHost>
    <name type="scientific">Zea mays</name>
    <name type="common">Maize</name>
    <dbReference type="NCBI Taxonomy" id="4577"/>
</organismHost>
<keyword id="KW-0167">Capsid protein</keyword>
<keyword id="KW-0548">Nucleotidyltransferase</keyword>
<keyword id="KW-0696">RNA-directed RNA polymerase</keyword>
<keyword id="KW-0808">Transferase</keyword>
<keyword id="KW-0946">Virion</keyword>
<organism>
    <name type="scientific">Sugarcane mosaic virus (strain SC)</name>
    <dbReference type="NCBI Taxonomy" id="12225"/>
    <lineage>
        <taxon>Viruses</taxon>
        <taxon>Riboviria</taxon>
        <taxon>Orthornavirae</taxon>
        <taxon>Pisuviricota</taxon>
        <taxon>Stelpaviricetes</taxon>
        <taxon>Patatavirales</taxon>
        <taxon>Potyviridae</taxon>
        <taxon>Potyvirus</taxon>
        <taxon>Potyvirus sacchari</taxon>
        <taxon>Sugarcane mosaic virus</taxon>
    </lineage>
</organism>